<comment type="catalytic activity">
    <reaction evidence="1">
        <text>(S)-4-amino-5-oxopentanoate = 5-aminolevulinate</text>
        <dbReference type="Rhea" id="RHEA:14265"/>
        <dbReference type="ChEBI" id="CHEBI:57501"/>
        <dbReference type="ChEBI" id="CHEBI:356416"/>
        <dbReference type="EC" id="5.4.3.8"/>
    </reaction>
</comment>
<comment type="cofactor">
    <cofactor evidence="1">
        <name>pyridoxal 5'-phosphate</name>
        <dbReference type="ChEBI" id="CHEBI:597326"/>
    </cofactor>
</comment>
<comment type="pathway">
    <text evidence="1">Porphyrin-containing compound metabolism; protoporphyrin-IX biosynthesis; 5-aminolevulinate from L-glutamyl-tRNA(Glu): step 2/2.</text>
</comment>
<comment type="subunit">
    <text evidence="1">Homodimer.</text>
</comment>
<comment type="subcellular location">
    <subcellularLocation>
        <location evidence="1">Cytoplasm</location>
    </subcellularLocation>
</comment>
<comment type="similarity">
    <text evidence="1">Belongs to the class-III pyridoxal-phosphate-dependent aminotransferase family. HemL subfamily.</text>
</comment>
<protein>
    <recommendedName>
        <fullName evidence="1">Glutamate-1-semialdehyde 2,1-aminomutase</fullName>
        <shortName evidence="1">GSA</shortName>
        <ecNumber evidence="1">5.4.3.8</ecNumber>
    </recommendedName>
    <alternativeName>
        <fullName evidence="1">Glutamate-1-semialdehyde aminotransferase</fullName>
        <shortName evidence="1">GSA-AT</shortName>
    </alternativeName>
</protein>
<feature type="chain" id="PRO_1000121888" description="Glutamate-1-semialdehyde 2,1-aminomutase">
    <location>
        <begin position="1"/>
        <end position="426"/>
    </location>
</feature>
<feature type="modified residue" description="N6-(pyridoxal phosphate)lysine" evidence="1">
    <location>
        <position position="265"/>
    </location>
</feature>
<accession>B7LWB5</accession>
<keyword id="KW-0963">Cytoplasm</keyword>
<keyword id="KW-0413">Isomerase</keyword>
<keyword id="KW-0627">Porphyrin biosynthesis</keyword>
<keyword id="KW-0663">Pyridoxal phosphate</keyword>
<reference key="1">
    <citation type="journal article" date="2009" name="PLoS Genet.">
        <title>Organised genome dynamics in the Escherichia coli species results in highly diverse adaptive paths.</title>
        <authorList>
            <person name="Touchon M."/>
            <person name="Hoede C."/>
            <person name="Tenaillon O."/>
            <person name="Barbe V."/>
            <person name="Baeriswyl S."/>
            <person name="Bidet P."/>
            <person name="Bingen E."/>
            <person name="Bonacorsi S."/>
            <person name="Bouchier C."/>
            <person name="Bouvet O."/>
            <person name="Calteau A."/>
            <person name="Chiapello H."/>
            <person name="Clermont O."/>
            <person name="Cruveiller S."/>
            <person name="Danchin A."/>
            <person name="Diard M."/>
            <person name="Dossat C."/>
            <person name="Karoui M.E."/>
            <person name="Frapy E."/>
            <person name="Garry L."/>
            <person name="Ghigo J.M."/>
            <person name="Gilles A.M."/>
            <person name="Johnson J."/>
            <person name="Le Bouguenec C."/>
            <person name="Lescat M."/>
            <person name="Mangenot S."/>
            <person name="Martinez-Jehanne V."/>
            <person name="Matic I."/>
            <person name="Nassif X."/>
            <person name="Oztas S."/>
            <person name="Petit M.A."/>
            <person name="Pichon C."/>
            <person name="Rouy Z."/>
            <person name="Ruf C.S."/>
            <person name="Schneider D."/>
            <person name="Tourret J."/>
            <person name="Vacherie B."/>
            <person name="Vallenet D."/>
            <person name="Medigue C."/>
            <person name="Rocha E.P.C."/>
            <person name="Denamur E."/>
        </authorList>
    </citation>
    <scope>NUCLEOTIDE SEQUENCE [LARGE SCALE GENOMIC DNA]</scope>
    <source>
        <strain>ATCC 35469 / DSM 13698 / BCRC 15582 / CCUG 18766 / IAM 14443 / JCM 21226 / LMG 7866 / NBRC 102419 / NCTC 12128 / CDC 0568-73</strain>
    </source>
</reference>
<proteinExistence type="inferred from homology"/>
<dbReference type="EC" id="5.4.3.8" evidence="1"/>
<dbReference type="EMBL" id="CU928158">
    <property type="protein sequence ID" value="CAQ87758.1"/>
    <property type="molecule type" value="Genomic_DNA"/>
</dbReference>
<dbReference type="RefSeq" id="WP_000045283.1">
    <property type="nucleotide sequence ID" value="NC_011740.1"/>
</dbReference>
<dbReference type="SMR" id="B7LWB5"/>
<dbReference type="GeneID" id="75058739"/>
<dbReference type="KEGG" id="efe:EFER_0177"/>
<dbReference type="HOGENOM" id="CLU_016922_1_5_6"/>
<dbReference type="OrthoDB" id="9801052at2"/>
<dbReference type="UniPathway" id="UPA00251">
    <property type="reaction ID" value="UER00317"/>
</dbReference>
<dbReference type="Proteomes" id="UP000000745">
    <property type="component" value="Chromosome"/>
</dbReference>
<dbReference type="GO" id="GO:0005737">
    <property type="term" value="C:cytoplasm"/>
    <property type="evidence" value="ECO:0007669"/>
    <property type="project" value="UniProtKB-SubCell"/>
</dbReference>
<dbReference type="GO" id="GO:0042286">
    <property type="term" value="F:glutamate-1-semialdehyde 2,1-aminomutase activity"/>
    <property type="evidence" value="ECO:0007669"/>
    <property type="project" value="UniProtKB-UniRule"/>
</dbReference>
<dbReference type="GO" id="GO:0030170">
    <property type="term" value="F:pyridoxal phosphate binding"/>
    <property type="evidence" value="ECO:0007669"/>
    <property type="project" value="InterPro"/>
</dbReference>
<dbReference type="GO" id="GO:0008483">
    <property type="term" value="F:transaminase activity"/>
    <property type="evidence" value="ECO:0007669"/>
    <property type="project" value="InterPro"/>
</dbReference>
<dbReference type="GO" id="GO:0006782">
    <property type="term" value="P:protoporphyrinogen IX biosynthetic process"/>
    <property type="evidence" value="ECO:0007669"/>
    <property type="project" value="UniProtKB-UniRule"/>
</dbReference>
<dbReference type="CDD" id="cd00610">
    <property type="entry name" value="OAT_like"/>
    <property type="match status" value="1"/>
</dbReference>
<dbReference type="FunFam" id="3.40.640.10:FF:000021">
    <property type="entry name" value="Glutamate-1-semialdehyde 2,1-aminomutase"/>
    <property type="match status" value="1"/>
</dbReference>
<dbReference type="FunFam" id="3.90.1150.10:FF:000012">
    <property type="entry name" value="Glutamate-1-semialdehyde 2,1-aminomutase"/>
    <property type="match status" value="1"/>
</dbReference>
<dbReference type="Gene3D" id="3.90.1150.10">
    <property type="entry name" value="Aspartate Aminotransferase, domain 1"/>
    <property type="match status" value="1"/>
</dbReference>
<dbReference type="Gene3D" id="3.40.640.10">
    <property type="entry name" value="Type I PLP-dependent aspartate aminotransferase-like (Major domain)"/>
    <property type="match status" value="1"/>
</dbReference>
<dbReference type="HAMAP" id="MF_00375">
    <property type="entry name" value="HemL_aminotrans_3"/>
    <property type="match status" value="1"/>
</dbReference>
<dbReference type="InterPro" id="IPR004639">
    <property type="entry name" value="4pyrrol_synth_GluAld_NH2Trfase"/>
</dbReference>
<dbReference type="InterPro" id="IPR005814">
    <property type="entry name" value="Aminotrans_3"/>
</dbReference>
<dbReference type="InterPro" id="IPR049704">
    <property type="entry name" value="Aminotrans_3_PPA_site"/>
</dbReference>
<dbReference type="InterPro" id="IPR015424">
    <property type="entry name" value="PyrdxlP-dep_Trfase"/>
</dbReference>
<dbReference type="InterPro" id="IPR015421">
    <property type="entry name" value="PyrdxlP-dep_Trfase_major"/>
</dbReference>
<dbReference type="InterPro" id="IPR015422">
    <property type="entry name" value="PyrdxlP-dep_Trfase_small"/>
</dbReference>
<dbReference type="NCBIfam" id="TIGR00713">
    <property type="entry name" value="hemL"/>
    <property type="match status" value="1"/>
</dbReference>
<dbReference type="NCBIfam" id="NF000818">
    <property type="entry name" value="PRK00062.1"/>
    <property type="match status" value="1"/>
</dbReference>
<dbReference type="PANTHER" id="PTHR43713">
    <property type="entry name" value="GLUTAMATE-1-SEMIALDEHYDE 2,1-AMINOMUTASE"/>
    <property type="match status" value="1"/>
</dbReference>
<dbReference type="PANTHER" id="PTHR43713:SF3">
    <property type="entry name" value="GLUTAMATE-1-SEMIALDEHYDE 2,1-AMINOMUTASE 1, CHLOROPLASTIC-RELATED"/>
    <property type="match status" value="1"/>
</dbReference>
<dbReference type="Pfam" id="PF00202">
    <property type="entry name" value="Aminotran_3"/>
    <property type="match status" value="1"/>
</dbReference>
<dbReference type="SUPFAM" id="SSF53383">
    <property type="entry name" value="PLP-dependent transferases"/>
    <property type="match status" value="1"/>
</dbReference>
<dbReference type="PROSITE" id="PS00600">
    <property type="entry name" value="AA_TRANSFER_CLASS_3"/>
    <property type="match status" value="1"/>
</dbReference>
<name>GSA_ESCF3</name>
<sequence length="426" mass="45410">MSKSENLYSAARELIPGGVNSPVRAFTGVGGTPLFIEKADGAYLYDVDGKAYIDYVGSWGPMVLGHNHPAIRNAVIEAAERGLSFGAPTEMEVKMAQLVTELVPTMDMVRMVNSGTEATMSAIRLARGFTGRDKIIKFEGCYHGHADCLLVKAGSGALTLGQPNSPGVPADFAKHTLTCTYNDLASVRAAFEQYPQEIACIIVEPVAGNMNCVPPLPEFLPGLRALCDEFGALLIIDEVMTGFRVALAGAQDYYDVVPDLTCLGKIIGGGMPVGAFGGRRDVMDALAPIGPVYQAGTLSGNPIAMAAGFACLNEVAQPGVHETLDELTTRLAEGLLEAAEEAGIPLVVNHVGGMFGIFFTDAESVTCYQDVMACDVERFKRFFHMMLDEGVYLAPSAFEAGFMSVAHSMEDINNTIDAARRVFAKL</sequence>
<gene>
    <name evidence="1" type="primary">hemL</name>
    <name type="ordered locus">EFER_0177</name>
</gene>
<evidence type="ECO:0000255" key="1">
    <source>
        <dbReference type="HAMAP-Rule" id="MF_00375"/>
    </source>
</evidence>
<organism>
    <name type="scientific">Escherichia fergusonii (strain ATCC 35469 / DSM 13698 / CCUG 18766 / IAM 14443 / JCM 21226 / LMG 7866 / NBRC 102419 / NCTC 12128 / CDC 0568-73)</name>
    <dbReference type="NCBI Taxonomy" id="585054"/>
    <lineage>
        <taxon>Bacteria</taxon>
        <taxon>Pseudomonadati</taxon>
        <taxon>Pseudomonadota</taxon>
        <taxon>Gammaproteobacteria</taxon>
        <taxon>Enterobacterales</taxon>
        <taxon>Enterobacteriaceae</taxon>
        <taxon>Escherichia</taxon>
    </lineage>
</organism>